<reference key="1">
    <citation type="submission" date="2006-12" db="EMBL/GenBank/DDBJ databases">
        <title>Complete sequence of chromosome of Mycobacterium sp. KMS.</title>
        <authorList>
            <consortium name="US DOE Joint Genome Institute"/>
            <person name="Copeland A."/>
            <person name="Lucas S."/>
            <person name="Lapidus A."/>
            <person name="Barry K."/>
            <person name="Detter J.C."/>
            <person name="Glavina del Rio T."/>
            <person name="Hammon N."/>
            <person name="Israni S."/>
            <person name="Dalin E."/>
            <person name="Tice H."/>
            <person name="Pitluck S."/>
            <person name="Kiss H."/>
            <person name="Brettin T."/>
            <person name="Bruce D."/>
            <person name="Han C."/>
            <person name="Tapia R."/>
            <person name="Gilna P."/>
            <person name="Schmutz J."/>
            <person name="Larimer F."/>
            <person name="Land M."/>
            <person name="Hauser L."/>
            <person name="Kyrpides N."/>
            <person name="Mikhailova N."/>
            <person name="Miller C.D."/>
            <person name="Richardson P."/>
        </authorList>
    </citation>
    <scope>NUCLEOTIDE SEQUENCE [LARGE SCALE GENOMIC DNA]</scope>
    <source>
        <strain>KMS</strain>
    </source>
</reference>
<keyword id="KW-0489">Methyltransferase</keyword>
<keyword id="KW-0949">S-adenosyl-L-methionine</keyword>
<keyword id="KW-0808">Transferase</keyword>
<dbReference type="EC" id="2.1.1.-"/>
<dbReference type="EMBL" id="CP000518">
    <property type="protein sequence ID" value="ABL93261.1"/>
    <property type="status" value="ALT_INIT"/>
    <property type="molecule type" value="Genomic_DNA"/>
</dbReference>
<dbReference type="SMR" id="A1UKA3"/>
<dbReference type="STRING" id="189918.Mkms_4069"/>
<dbReference type="KEGG" id="mkm:Mkms_4069"/>
<dbReference type="HOGENOM" id="CLU_067676_2_0_11"/>
<dbReference type="GO" id="GO:0008171">
    <property type="term" value="F:O-methyltransferase activity"/>
    <property type="evidence" value="ECO:0007669"/>
    <property type="project" value="InterPro"/>
</dbReference>
<dbReference type="GO" id="GO:0008757">
    <property type="term" value="F:S-adenosylmethionine-dependent methyltransferase activity"/>
    <property type="evidence" value="ECO:0007669"/>
    <property type="project" value="TreeGrafter"/>
</dbReference>
<dbReference type="GO" id="GO:0032259">
    <property type="term" value="P:methylation"/>
    <property type="evidence" value="ECO:0007669"/>
    <property type="project" value="UniProtKB-KW"/>
</dbReference>
<dbReference type="CDD" id="cd02440">
    <property type="entry name" value="AdoMet_MTases"/>
    <property type="match status" value="1"/>
</dbReference>
<dbReference type="Gene3D" id="3.40.50.150">
    <property type="entry name" value="Vaccinia Virus protein VP39"/>
    <property type="match status" value="1"/>
</dbReference>
<dbReference type="InterPro" id="IPR050362">
    <property type="entry name" value="Cation-dep_OMT"/>
</dbReference>
<dbReference type="InterPro" id="IPR029063">
    <property type="entry name" value="SAM-dependent_MTases_sf"/>
</dbReference>
<dbReference type="InterPro" id="IPR002935">
    <property type="entry name" value="SAM_O-MeTrfase"/>
</dbReference>
<dbReference type="PANTHER" id="PTHR10509:SF85">
    <property type="entry name" value="O-METHYLTRANSFERASE RV1220C-RELATED"/>
    <property type="match status" value="1"/>
</dbReference>
<dbReference type="PANTHER" id="PTHR10509">
    <property type="entry name" value="O-METHYLTRANSFERASE-RELATED"/>
    <property type="match status" value="1"/>
</dbReference>
<dbReference type="Pfam" id="PF01596">
    <property type="entry name" value="Methyltransf_3"/>
    <property type="match status" value="1"/>
</dbReference>
<dbReference type="SUPFAM" id="SSF53335">
    <property type="entry name" value="S-adenosyl-L-methionine-dependent methyltransferases"/>
    <property type="match status" value="1"/>
</dbReference>
<dbReference type="PROSITE" id="PS51682">
    <property type="entry name" value="SAM_OMT_I"/>
    <property type="match status" value="1"/>
</dbReference>
<accession>A1UKA3</accession>
<comment type="similarity">
    <text evidence="2">Belongs to the class I-like SAM-binding methyltransferase superfamily. Cation-dependent O-methyltransferase family.</text>
</comment>
<comment type="sequence caution" evidence="3">
    <conflict type="erroneous initiation">
        <sequence resource="EMBL-CDS" id="ABL93261"/>
    </conflict>
</comment>
<protein>
    <recommendedName>
        <fullName>Putative O-methyltransferase Mkms_4069</fullName>
        <ecNumber>2.1.1.-</ecNumber>
    </recommendedName>
</protein>
<organism>
    <name type="scientific">Mycobacterium sp. (strain KMS)</name>
    <dbReference type="NCBI Taxonomy" id="189918"/>
    <lineage>
        <taxon>Bacteria</taxon>
        <taxon>Bacillati</taxon>
        <taxon>Actinomycetota</taxon>
        <taxon>Actinomycetes</taxon>
        <taxon>Mycobacteriales</taxon>
        <taxon>Mycobacteriaceae</taxon>
        <taxon>Mycobacterium</taxon>
    </lineage>
</organism>
<name>Y4069_MYCSK</name>
<sequence length="220" mass="22700">MASTDDPAGQRPSRAEAIVAHAEQSISEDAIVAAARERAVDMGAGAVTPAVGALLSVLARLTEAKAVVEVGTGAGVSGLWLLSGMREDGVLTTIDVEPEHQRIAKQAFTEAGIGPGRTRLISGRAQDVLTRLADESYDLVFIDADPVDQPQFVVEGVRLLRSGGAIVVHRAALGGRAGDAGANDAEVSAVREAARLIAEDERLTPVLIPLGDGLLAAARD</sequence>
<evidence type="ECO:0000250" key="1"/>
<evidence type="ECO:0000255" key="2">
    <source>
        <dbReference type="PROSITE-ProRule" id="PRU01019"/>
    </source>
</evidence>
<evidence type="ECO:0000305" key="3"/>
<feature type="chain" id="PRO_0000380102" description="Putative O-methyltransferase Mkms_4069">
    <location>
        <begin position="1"/>
        <end position="220"/>
    </location>
</feature>
<feature type="binding site" evidence="2">
    <location>
        <position position="47"/>
    </location>
    <ligand>
        <name>S-adenosyl-L-methionine</name>
        <dbReference type="ChEBI" id="CHEBI:59789"/>
    </ligand>
</feature>
<feature type="binding site" evidence="2">
    <location>
        <position position="69"/>
    </location>
    <ligand>
        <name>S-adenosyl-L-methionine</name>
        <dbReference type="ChEBI" id="CHEBI:59789"/>
    </ligand>
</feature>
<feature type="binding site" evidence="2">
    <location>
        <begin position="71"/>
        <end position="72"/>
    </location>
    <ligand>
        <name>S-adenosyl-L-methionine</name>
        <dbReference type="ChEBI" id="CHEBI:59789"/>
    </ligand>
</feature>
<feature type="binding site" evidence="2">
    <location>
        <position position="77"/>
    </location>
    <ligand>
        <name>S-adenosyl-L-methionine</name>
        <dbReference type="ChEBI" id="CHEBI:59789"/>
    </ligand>
</feature>
<feature type="binding site" evidence="2">
    <location>
        <position position="95"/>
    </location>
    <ligand>
        <name>S-adenosyl-L-methionine</name>
        <dbReference type="ChEBI" id="CHEBI:59789"/>
    </ligand>
</feature>
<feature type="binding site" evidence="2">
    <location>
        <position position="96"/>
    </location>
    <ligand>
        <name>S-adenosyl-L-methionine</name>
        <dbReference type="ChEBI" id="CHEBI:59789"/>
    </ligand>
</feature>
<feature type="binding site" evidence="1">
    <location>
        <position position="143"/>
    </location>
    <ligand>
        <name>substrate</name>
    </ligand>
</feature>
<feature type="binding site" evidence="2">
    <location>
        <position position="145"/>
    </location>
    <ligand>
        <name>S-adenosyl-L-methionine</name>
        <dbReference type="ChEBI" id="CHEBI:59789"/>
    </ligand>
</feature>
<gene>
    <name type="ordered locus">Mkms_4069</name>
</gene>
<proteinExistence type="inferred from homology"/>